<proteinExistence type="inferred from homology"/>
<dbReference type="EMBL" id="CP000685">
    <property type="protein sequence ID" value="ABQ05582.1"/>
    <property type="molecule type" value="Genomic_DNA"/>
</dbReference>
<dbReference type="RefSeq" id="WP_012024621.1">
    <property type="nucleotide sequence ID" value="NC_009441.1"/>
</dbReference>
<dbReference type="SMR" id="A5FGU0"/>
<dbReference type="STRING" id="376686.Fjoh_2555"/>
<dbReference type="KEGG" id="fjo:Fjoh_2555"/>
<dbReference type="eggNOG" id="COG0718">
    <property type="taxonomic scope" value="Bacteria"/>
</dbReference>
<dbReference type="HOGENOM" id="CLU_140930_3_0_10"/>
<dbReference type="OrthoDB" id="1149219at2"/>
<dbReference type="Proteomes" id="UP000006694">
    <property type="component" value="Chromosome"/>
</dbReference>
<dbReference type="GO" id="GO:0043590">
    <property type="term" value="C:bacterial nucleoid"/>
    <property type="evidence" value="ECO:0007669"/>
    <property type="project" value="UniProtKB-UniRule"/>
</dbReference>
<dbReference type="GO" id="GO:0005737">
    <property type="term" value="C:cytoplasm"/>
    <property type="evidence" value="ECO:0007669"/>
    <property type="project" value="UniProtKB-UniRule"/>
</dbReference>
<dbReference type="GO" id="GO:0003677">
    <property type="term" value="F:DNA binding"/>
    <property type="evidence" value="ECO:0007669"/>
    <property type="project" value="UniProtKB-UniRule"/>
</dbReference>
<dbReference type="Gene3D" id="3.30.1310.10">
    <property type="entry name" value="Nucleoid-associated protein YbaB-like domain"/>
    <property type="match status" value="1"/>
</dbReference>
<dbReference type="HAMAP" id="MF_00274">
    <property type="entry name" value="DNA_YbaB_EbfC"/>
    <property type="match status" value="1"/>
</dbReference>
<dbReference type="InterPro" id="IPR036894">
    <property type="entry name" value="YbaB-like_sf"/>
</dbReference>
<dbReference type="InterPro" id="IPR004401">
    <property type="entry name" value="YbaB/EbfC"/>
</dbReference>
<dbReference type="NCBIfam" id="TIGR00103">
    <property type="entry name" value="DNA_YbaB_EbfC"/>
    <property type="match status" value="1"/>
</dbReference>
<dbReference type="Pfam" id="PF02575">
    <property type="entry name" value="YbaB_DNA_bd"/>
    <property type="match status" value="1"/>
</dbReference>
<dbReference type="PIRSF" id="PIRSF004555">
    <property type="entry name" value="UCP004555"/>
    <property type="match status" value="1"/>
</dbReference>
<dbReference type="SUPFAM" id="SSF82607">
    <property type="entry name" value="YbaB-like"/>
    <property type="match status" value="1"/>
</dbReference>
<keyword id="KW-0963">Cytoplasm</keyword>
<keyword id="KW-0238">DNA-binding</keyword>
<reference key="1">
    <citation type="journal article" date="2009" name="Appl. Environ. Microbiol.">
        <title>Novel features of the polysaccharide-digesting gliding bacterium Flavobacterium johnsoniae as revealed by genome sequence analysis.</title>
        <authorList>
            <person name="McBride M.J."/>
            <person name="Xie G."/>
            <person name="Martens E.C."/>
            <person name="Lapidus A."/>
            <person name="Henrissat B."/>
            <person name="Rhodes R.G."/>
            <person name="Goltsman E."/>
            <person name="Wang W."/>
            <person name="Xu J."/>
            <person name="Hunnicutt D.W."/>
            <person name="Staroscik A.M."/>
            <person name="Hoover T.R."/>
            <person name="Cheng Y.Q."/>
            <person name="Stein J.L."/>
        </authorList>
    </citation>
    <scope>NUCLEOTIDE SEQUENCE [LARGE SCALE GENOMIC DNA]</scope>
    <source>
        <strain>ATCC 17061 / DSM 2064 / JCM 8514 / BCRC 14874 / CCUG 350202 / NBRC 14942 / NCIMB 11054 / UW101</strain>
    </source>
</reference>
<comment type="function">
    <text evidence="1">Binds to DNA and alters its conformation. May be involved in regulation of gene expression, nucleoid organization and DNA protection.</text>
</comment>
<comment type="subunit">
    <text evidence="1">Homodimer.</text>
</comment>
<comment type="subcellular location">
    <subcellularLocation>
        <location evidence="1">Cytoplasm</location>
        <location evidence="1">Nucleoid</location>
    </subcellularLocation>
</comment>
<comment type="similarity">
    <text evidence="1">Belongs to the YbaB/EbfC family.</text>
</comment>
<name>Y2555_FLAJ1</name>
<protein>
    <recommendedName>
        <fullName evidence="1">Nucleoid-associated protein Fjoh_2555</fullName>
    </recommendedName>
</protein>
<feature type="chain" id="PRO_1000204772" description="Nucleoid-associated protein Fjoh_2555">
    <location>
        <begin position="1"/>
        <end position="106"/>
    </location>
</feature>
<accession>A5FGU0</accession>
<evidence type="ECO:0000255" key="1">
    <source>
        <dbReference type="HAMAP-Rule" id="MF_00274"/>
    </source>
</evidence>
<organism>
    <name type="scientific">Flavobacterium johnsoniae (strain ATCC 17061 / DSM 2064 / JCM 8514 / BCRC 14874 / CCUG 350202 / NBRC 14942 / NCIMB 11054 / UW101)</name>
    <name type="common">Cytophaga johnsonae</name>
    <dbReference type="NCBI Taxonomy" id="376686"/>
    <lineage>
        <taxon>Bacteria</taxon>
        <taxon>Pseudomonadati</taxon>
        <taxon>Bacteroidota</taxon>
        <taxon>Flavobacteriia</taxon>
        <taxon>Flavobacteriales</taxon>
        <taxon>Flavobacteriaceae</taxon>
        <taxon>Flavobacterium</taxon>
    </lineage>
</organism>
<sequence>MDLMGMMGKLKETQQKIEDTKKRLDTVLIDEQSADGLLKITVTANRKVKSISIDDSLLEDKEQLEDYLVVTLNKVIEKATSVNERELDAVARMDMPSIPGMDNLFK</sequence>
<gene>
    <name type="ordered locus">Fjoh_2555</name>
</gene>